<keyword id="KW-0067">ATP-binding</keyword>
<keyword id="KW-0119">Carbohydrate metabolism</keyword>
<keyword id="KW-0418">Kinase</keyword>
<keyword id="KW-0460">Magnesium</keyword>
<keyword id="KW-0479">Metal-binding</keyword>
<keyword id="KW-0511">Multifunctional enzyme</keyword>
<keyword id="KW-0547">Nucleotide-binding</keyword>
<keyword id="KW-0723">Serine/threonine-protein kinase</keyword>
<keyword id="KW-0808">Transferase</keyword>
<comment type="function">
    <text evidence="1">Catalyzes the ATP- as well as the pyrophosphate-dependent phosphorylation of a specific serine residue in HPr, a phosphocarrier protein of the phosphoenolpyruvate-dependent sugar phosphotransferase system (PTS). HprK/P also catalyzes the pyrophosphate-producing, inorganic phosphate-dependent dephosphorylation (phosphorolysis) of seryl-phosphorylated HPr (P-Ser-HPr). The two antagonistic activities of HprK/P are regulated by several intracellular metabolites, which change their concentration in response to the absence or presence of rapidly metabolisable carbon sources (glucose, fructose, etc.) in the growth medium. Therefore, by controlling the phosphorylation state of HPr, HPrK/P is a sensor enzyme that plays a major role in the regulation of carbon metabolism and sugar transport: it mediates carbon catabolite repression (CCR), and regulates PTS-catalyzed carbohydrate uptake and inducer exclusion.</text>
</comment>
<comment type="catalytic activity">
    <reaction evidence="1">
        <text>[HPr protein]-L-serine + ATP = [HPr protein]-O-phospho-L-serine + ADP + H(+)</text>
        <dbReference type="Rhea" id="RHEA:46600"/>
        <dbReference type="Rhea" id="RHEA-COMP:11602"/>
        <dbReference type="Rhea" id="RHEA-COMP:11603"/>
        <dbReference type="ChEBI" id="CHEBI:15378"/>
        <dbReference type="ChEBI" id="CHEBI:29999"/>
        <dbReference type="ChEBI" id="CHEBI:30616"/>
        <dbReference type="ChEBI" id="CHEBI:83421"/>
        <dbReference type="ChEBI" id="CHEBI:456216"/>
    </reaction>
</comment>
<comment type="catalytic activity">
    <reaction evidence="1">
        <text>[HPr protein]-O-phospho-L-serine + phosphate + H(+) = [HPr protein]-L-serine + diphosphate</text>
        <dbReference type="Rhea" id="RHEA:46604"/>
        <dbReference type="Rhea" id="RHEA-COMP:11602"/>
        <dbReference type="Rhea" id="RHEA-COMP:11603"/>
        <dbReference type="ChEBI" id="CHEBI:15378"/>
        <dbReference type="ChEBI" id="CHEBI:29999"/>
        <dbReference type="ChEBI" id="CHEBI:33019"/>
        <dbReference type="ChEBI" id="CHEBI:43474"/>
        <dbReference type="ChEBI" id="CHEBI:83421"/>
    </reaction>
</comment>
<comment type="cofactor">
    <cofactor evidence="1">
        <name>Mg(2+)</name>
        <dbReference type="ChEBI" id="CHEBI:18420"/>
    </cofactor>
</comment>
<comment type="subunit">
    <text evidence="1">Homohexamer.</text>
</comment>
<comment type="domain">
    <text evidence="1">The Walker A ATP-binding motif also binds Pi and PPi.</text>
</comment>
<comment type="miscellaneous">
    <text evidence="1">Both phosphorylation and phosphorolysis are carried out by the same active site and suggest a common mechanism for both reactions.</text>
</comment>
<comment type="similarity">
    <text evidence="1">Belongs to the HPrK/P family.</text>
</comment>
<feature type="chain" id="PRO_0000058961" description="HPr kinase/phosphorylase">
    <location>
        <begin position="1"/>
        <end position="319"/>
    </location>
</feature>
<feature type="region of interest" description="Important for the catalytic mechanism of both phosphorylation and dephosphorylation" evidence="1">
    <location>
        <begin position="204"/>
        <end position="213"/>
    </location>
</feature>
<feature type="region of interest" description="Important for the catalytic mechanism of dephosphorylation" evidence="1">
    <location>
        <begin position="267"/>
        <end position="272"/>
    </location>
</feature>
<feature type="active site" evidence="1">
    <location>
        <position position="141"/>
    </location>
</feature>
<feature type="active site" evidence="1">
    <location>
        <position position="162"/>
    </location>
</feature>
<feature type="active site" description="Proton acceptor; for phosphorylation activity. Proton donor; for dephosphorylation activity" evidence="1">
    <location>
        <position position="180"/>
    </location>
</feature>
<feature type="active site" evidence="1">
    <location>
        <position position="246"/>
    </location>
</feature>
<feature type="binding site" evidence="1">
    <location>
        <begin position="156"/>
        <end position="163"/>
    </location>
    <ligand>
        <name>ATP</name>
        <dbReference type="ChEBI" id="CHEBI:30616"/>
    </ligand>
</feature>
<feature type="binding site" evidence="1">
    <location>
        <position position="163"/>
    </location>
    <ligand>
        <name>Mg(2+)</name>
        <dbReference type="ChEBI" id="CHEBI:18420"/>
    </ligand>
</feature>
<feature type="binding site" evidence="1">
    <location>
        <position position="205"/>
    </location>
    <ligand>
        <name>Mg(2+)</name>
        <dbReference type="ChEBI" id="CHEBI:18420"/>
    </ligand>
</feature>
<sequence>MVEAVKVSELVKDLPSLRVVEGKEYLDQKLINTSDISRPGLELTGYFDFYPKNRIQLLGRTEISYSARLDHDLRERVFNKMATPETPCFIVSRGLPIPSEMLEAAEKEKIPVLSSNMATTHLSSVITQFLDEKLAPRKSIHGVLVEIYGMGVLIIGNSGVGKSETALDLVKRGHRLIADDRVDVYQKDDKTVVGEAPKILKHLMEIRGIGIIDVMNLFGAGAVKDSTEIQLIICLQNWDPKANYDRLGFNEKTREIFEVDVPQVTVPVKVGRNLAIIIEVAAMNFRAKKMGYDASQKFEQNLTELISDNSKKDEGDSRK</sequence>
<organism>
    <name type="scientific">Lactobacillus johnsonii (strain CNCM I-12250 / La1 / NCC 533)</name>
    <dbReference type="NCBI Taxonomy" id="257314"/>
    <lineage>
        <taxon>Bacteria</taxon>
        <taxon>Bacillati</taxon>
        <taxon>Bacillota</taxon>
        <taxon>Bacilli</taxon>
        <taxon>Lactobacillales</taxon>
        <taxon>Lactobacillaceae</taxon>
        <taxon>Lactobacillus</taxon>
    </lineage>
</organism>
<proteinExistence type="inferred from homology"/>
<gene>
    <name evidence="1" type="primary">hprK</name>
    <name type="ordered locus">LJ_0849</name>
</gene>
<accession>P61324</accession>
<evidence type="ECO:0000255" key="1">
    <source>
        <dbReference type="HAMAP-Rule" id="MF_01249"/>
    </source>
</evidence>
<dbReference type="EC" id="2.7.11.-" evidence="1"/>
<dbReference type="EC" id="2.7.4.-" evidence="1"/>
<dbReference type="EMBL" id="AE017198">
    <property type="protein sequence ID" value="AAS08670.1"/>
    <property type="molecule type" value="Genomic_DNA"/>
</dbReference>
<dbReference type="RefSeq" id="WP_011161767.1">
    <property type="nucleotide sequence ID" value="NC_005362.1"/>
</dbReference>
<dbReference type="SMR" id="P61324"/>
<dbReference type="KEGG" id="ljo:LJ_0849"/>
<dbReference type="PATRIC" id="fig|257314.6.peg.706"/>
<dbReference type="eggNOG" id="COG1493">
    <property type="taxonomic scope" value="Bacteria"/>
</dbReference>
<dbReference type="HOGENOM" id="CLU_052030_0_1_9"/>
<dbReference type="Proteomes" id="UP000000581">
    <property type="component" value="Chromosome"/>
</dbReference>
<dbReference type="GO" id="GO:0005524">
    <property type="term" value="F:ATP binding"/>
    <property type="evidence" value="ECO:0007669"/>
    <property type="project" value="UniProtKB-UniRule"/>
</dbReference>
<dbReference type="GO" id="GO:0000287">
    <property type="term" value="F:magnesium ion binding"/>
    <property type="evidence" value="ECO:0007669"/>
    <property type="project" value="UniProtKB-UniRule"/>
</dbReference>
<dbReference type="GO" id="GO:0000155">
    <property type="term" value="F:phosphorelay sensor kinase activity"/>
    <property type="evidence" value="ECO:0007669"/>
    <property type="project" value="InterPro"/>
</dbReference>
<dbReference type="GO" id="GO:0004674">
    <property type="term" value="F:protein serine/threonine kinase activity"/>
    <property type="evidence" value="ECO:0007669"/>
    <property type="project" value="UniProtKB-KW"/>
</dbReference>
<dbReference type="GO" id="GO:0004712">
    <property type="term" value="F:protein serine/threonine/tyrosine kinase activity"/>
    <property type="evidence" value="ECO:0007669"/>
    <property type="project" value="UniProtKB-UniRule"/>
</dbReference>
<dbReference type="GO" id="GO:0006109">
    <property type="term" value="P:regulation of carbohydrate metabolic process"/>
    <property type="evidence" value="ECO:0007669"/>
    <property type="project" value="UniProtKB-UniRule"/>
</dbReference>
<dbReference type="CDD" id="cd01918">
    <property type="entry name" value="HprK_C"/>
    <property type="match status" value="1"/>
</dbReference>
<dbReference type="FunFam" id="3.40.50.300:FF:000174">
    <property type="entry name" value="HPr kinase/phosphorylase"/>
    <property type="match status" value="1"/>
</dbReference>
<dbReference type="Gene3D" id="3.40.1390.20">
    <property type="entry name" value="HprK N-terminal domain-like"/>
    <property type="match status" value="1"/>
</dbReference>
<dbReference type="Gene3D" id="3.40.50.300">
    <property type="entry name" value="P-loop containing nucleotide triphosphate hydrolases"/>
    <property type="match status" value="1"/>
</dbReference>
<dbReference type="HAMAP" id="MF_01249">
    <property type="entry name" value="HPr_kinase"/>
    <property type="match status" value="1"/>
</dbReference>
<dbReference type="InterPro" id="IPR003755">
    <property type="entry name" value="HPr(Ser)_kin/Pase"/>
</dbReference>
<dbReference type="InterPro" id="IPR011104">
    <property type="entry name" value="Hpr_kin/Pase_C"/>
</dbReference>
<dbReference type="InterPro" id="IPR011126">
    <property type="entry name" value="Hpr_kin/Pase_Hpr_N"/>
</dbReference>
<dbReference type="InterPro" id="IPR027417">
    <property type="entry name" value="P-loop_NTPase"/>
</dbReference>
<dbReference type="InterPro" id="IPR028979">
    <property type="entry name" value="Ser_kin/Pase_Hpr-like_N_sf"/>
</dbReference>
<dbReference type="NCBIfam" id="TIGR00679">
    <property type="entry name" value="hpr-ser"/>
    <property type="match status" value="1"/>
</dbReference>
<dbReference type="PANTHER" id="PTHR30305:SF1">
    <property type="entry name" value="HPR KINASE_PHOSPHORYLASE"/>
    <property type="match status" value="1"/>
</dbReference>
<dbReference type="PANTHER" id="PTHR30305">
    <property type="entry name" value="PROTEIN YJDM-RELATED"/>
    <property type="match status" value="1"/>
</dbReference>
<dbReference type="Pfam" id="PF07475">
    <property type="entry name" value="Hpr_kinase_C"/>
    <property type="match status" value="1"/>
</dbReference>
<dbReference type="Pfam" id="PF02603">
    <property type="entry name" value="Hpr_kinase_N"/>
    <property type="match status" value="1"/>
</dbReference>
<dbReference type="SUPFAM" id="SSF75138">
    <property type="entry name" value="HprK N-terminal domain-like"/>
    <property type="match status" value="1"/>
</dbReference>
<dbReference type="SUPFAM" id="SSF53795">
    <property type="entry name" value="PEP carboxykinase-like"/>
    <property type="match status" value="1"/>
</dbReference>
<protein>
    <recommendedName>
        <fullName evidence="1">HPr kinase/phosphorylase</fullName>
        <shortName evidence="1">HPrK/P</shortName>
        <ecNumber evidence="1">2.7.11.-</ecNumber>
        <ecNumber evidence="1">2.7.4.-</ecNumber>
    </recommendedName>
    <alternativeName>
        <fullName evidence="1">HPr(Ser) kinase/phosphorylase</fullName>
    </alternativeName>
</protein>
<name>HPRK_LACJO</name>
<reference key="1">
    <citation type="journal article" date="2004" name="Proc. Natl. Acad. Sci. U.S.A.">
        <title>The genome sequence of the probiotic intestinal bacterium Lactobacillus johnsonii NCC 533.</title>
        <authorList>
            <person name="Pridmore R.D."/>
            <person name="Berger B."/>
            <person name="Desiere F."/>
            <person name="Vilanova D."/>
            <person name="Barretto C."/>
            <person name="Pittet A.-C."/>
            <person name="Zwahlen M.-C."/>
            <person name="Rouvet M."/>
            <person name="Altermann E."/>
            <person name="Barrangou R."/>
            <person name="Mollet B."/>
            <person name="Mercenier A."/>
            <person name="Klaenhammer T."/>
            <person name="Arigoni F."/>
            <person name="Schell M.A."/>
        </authorList>
    </citation>
    <scope>NUCLEOTIDE SEQUENCE [LARGE SCALE GENOMIC DNA]</scope>
    <source>
        <strain>CNCM I-1225 / La1 / NCC 533</strain>
    </source>
</reference>